<organism>
    <name type="scientific">Mycolicibacterium smegmatis (strain ATCC 700084 / mc(2)155)</name>
    <name type="common">Mycobacterium smegmatis</name>
    <dbReference type="NCBI Taxonomy" id="246196"/>
    <lineage>
        <taxon>Bacteria</taxon>
        <taxon>Bacillati</taxon>
        <taxon>Actinomycetota</taxon>
        <taxon>Actinomycetes</taxon>
        <taxon>Mycobacteriales</taxon>
        <taxon>Mycobacteriaceae</taxon>
        <taxon>Mycolicibacterium</taxon>
    </lineage>
</organism>
<comment type="similarity">
    <text evidence="1">Belongs to the bacterial ribosomal protein bL32 family.</text>
</comment>
<accession>A0R3I9</accession>
<accession>I7FSF3</accession>
<gene>
    <name evidence="1" type="primary">rpmF</name>
    <name type="ordered locus">MSMEG_5489</name>
    <name type="ordered locus">MSMEI_5337</name>
</gene>
<dbReference type="EMBL" id="CP000480">
    <property type="protein sequence ID" value="ABK71255.1"/>
    <property type="molecule type" value="Genomic_DNA"/>
</dbReference>
<dbReference type="EMBL" id="CP001663">
    <property type="protein sequence ID" value="AFP41778.1"/>
    <property type="molecule type" value="Genomic_DNA"/>
</dbReference>
<dbReference type="RefSeq" id="WP_003896886.1">
    <property type="nucleotide sequence ID" value="NZ_SIJM01000006.1"/>
</dbReference>
<dbReference type="RefSeq" id="YP_889727.1">
    <property type="nucleotide sequence ID" value="NC_008596.1"/>
</dbReference>
<dbReference type="PDB" id="5O60">
    <property type="method" value="EM"/>
    <property type="resolution" value="3.20 A"/>
    <property type="chains" value="b=1-57"/>
</dbReference>
<dbReference type="PDB" id="5O61">
    <property type="method" value="EM"/>
    <property type="resolution" value="3.31 A"/>
    <property type="chains" value="b=1-57"/>
</dbReference>
<dbReference type="PDB" id="5XYM">
    <property type="method" value="EM"/>
    <property type="resolution" value="3.08 A"/>
    <property type="chains" value="0=1-57"/>
</dbReference>
<dbReference type="PDB" id="5ZEB">
    <property type="method" value="EM"/>
    <property type="resolution" value="3.40 A"/>
    <property type="chains" value="3=1-57"/>
</dbReference>
<dbReference type="PDB" id="5ZEP">
    <property type="method" value="EM"/>
    <property type="resolution" value="3.40 A"/>
    <property type="chains" value="z=1-57"/>
</dbReference>
<dbReference type="PDB" id="5ZET">
    <property type="method" value="EM"/>
    <property type="resolution" value="3.20 A"/>
    <property type="chains" value="3=1-57"/>
</dbReference>
<dbReference type="PDB" id="6DZI">
    <property type="method" value="EM"/>
    <property type="resolution" value="3.46 A"/>
    <property type="chains" value="b=2-55"/>
</dbReference>
<dbReference type="PDB" id="6DZP">
    <property type="method" value="EM"/>
    <property type="resolution" value="3.42 A"/>
    <property type="chains" value="b=1-57"/>
</dbReference>
<dbReference type="PDB" id="7S0S">
    <property type="method" value="EM"/>
    <property type="resolution" value="3.05 A"/>
    <property type="chains" value="c=2-55"/>
</dbReference>
<dbReference type="PDB" id="7XAM">
    <property type="method" value="EM"/>
    <property type="resolution" value="2.80 A"/>
    <property type="chains" value="b=1-57"/>
</dbReference>
<dbReference type="PDB" id="7Y41">
    <property type="method" value="EM"/>
    <property type="resolution" value="4.10 A"/>
    <property type="chains" value="b=1-57"/>
</dbReference>
<dbReference type="PDB" id="8FR8">
    <property type="method" value="EM"/>
    <property type="resolution" value="2.76 A"/>
    <property type="chains" value="8=2-55"/>
</dbReference>
<dbReference type="PDB" id="8KAB">
    <property type="method" value="EM"/>
    <property type="resolution" value="3.30 A"/>
    <property type="chains" value="b=1-57"/>
</dbReference>
<dbReference type="PDB" id="8V9J">
    <property type="method" value="EM"/>
    <property type="resolution" value="3.10 A"/>
    <property type="chains" value="4=1-57"/>
</dbReference>
<dbReference type="PDB" id="8V9K">
    <property type="method" value="EM"/>
    <property type="resolution" value="3.10 A"/>
    <property type="chains" value="4=1-57"/>
</dbReference>
<dbReference type="PDB" id="8V9L">
    <property type="method" value="EM"/>
    <property type="resolution" value="3.00 A"/>
    <property type="chains" value="4=1-57"/>
</dbReference>
<dbReference type="PDB" id="8VIO">
    <property type="method" value="EM"/>
    <property type="resolution" value="3.26 A"/>
    <property type="chains" value="b=1-57"/>
</dbReference>
<dbReference type="PDB" id="8VK0">
    <property type="method" value="EM"/>
    <property type="resolution" value="3.14 A"/>
    <property type="chains" value="b=1-57"/>
</dbReference>
<dbReference type="PDB" id="8VK7">
    <property type="method" value="EM"/>
    <property type="resolution" value="3.09 A"/>
    <property type="chains" value="b=1-57"/>
</dbReference>
<dbReference type="PDB" id="8VKI">
    <property type="method" value="EM"/>
    <property type="resolution" value="2.96 A"/>
    <property type="chains" value="b=1-57"/>
</dbReference>
<dbReference type="PDB" id="8VKW">
    <property type="method" value="EM"/>
    <property type="resolution" value="3.44 A"/>
    <property type="chains" value="b=1-57"/>
</dbReference>
<dbReference type="PDB" id="8VR4">
    <property type="method" value="EM"/>
    <property type="resolution" value="2.80 A"/>
    <property type="chains" value="b=1-57"/>
</dbReference>
<dbReference type="PDB" id="8VR8">
    <property type="method" value="EM"/>
    <property type="resolution" value="3.25 A"/>
    <property type="chains" value="b=1-57"/>
</dbReference>
<dbReference type="PDB" id="8VRL">
    <property type="method" value="EM"/>
    <property type="resolution" value="3.33 A"/>
    <property type="chains" value="b=1-57"/>
</dbReference>
<dbReference type="PDB" id="8WHX">
    <property type="method" value="EM"/>
    <property type="resolution" value="2.80 A"/>
    <property type="chains" value="5=1-57"/>
</dbReference>
<dbReference type="PDB" id="8WHY">
    <property type="method" value="EM"/>
    <property type="resolution" value="2.70 A"/>
    <property type="chains" value="5=1-57"/>
</dbReference>
<dbReference type="PDB" id="8WI7">
    <property type="method" value="EM"/>
    <property type="resolution" value="3.50 A"/>
    <property type="chains" value="5=1-57"/>
</dbReference>
<dbReference type="PDB" id="8WI8">
    <property type="method" value="EM"/>
    <property type="resolution" value="2.70 A"/>
    <property type="chains" value="5=1-57"/>
</dbReference>
<dbReference type="PDB" id="8WIB">
    <property type="method" value="EM"/>
    <property type="resolution" value="3.50 A"/>
    <property type="chains" value="5=1-57"/>
</dbReference>
<dbReference type="PDB" id="8WIC">
    <property type="method" value="EM"/>
    <property type="resolution" value="3.50 A"/>
    <property type="chains" value="5=1-57"/>
</dbReference>
<dbReference type="PDB" id="8XZ3">
    <property type="method" value="EM"/>
    <property type="resolution" value="3.60 A"/>
    <property type="chains" value="b=2-55"/>
</dbReference>
<dbReference type="PDBsum" id="5O60"/>
<dbReference type="PDBsum" id="5O61"/>
<dbReference type="PDBsum" id="5XYM"/>
<dbReference type="PDBsum" id="5ZEB"/>
<dbReference type="PDBsum" id="5ZEP"/>
<dbReference type="PDBsum" id="5ZET"/>
<dbReference type="PDBsum" id="6DZI"/>
<dbReference type="PDBsum" id="6DZP"/>
<dbReference type="PDBsum" id="7S0S"/>
<dbReference type="PDBsum" id="7XAM"/>
<dbReference type="PDBsum" id="7Y41"/>
<dbReference type="PDBsum" id="8FR8"/>
<dbReference type="PDBsum" id="8KAB"/>
<dbReference type="PDBsum" id="8V9J"/>
<dbReference type="PDBsum" id="8V9K"/>
<dbReference type="PDBsum" id="8V9L"/>
<dbReference type="PDBsum" id="8VIO"/>
<dbReference type="PDBsum" id="8VK0"/>
<dbReference type="PDBsum" id="8VK7"/>
<dbReference type="PDBsum" id="8VKI"/>
<dbReference type="PDBsum" id="8VKW"/>
<dbReference type="PDBsum" id="8VR4"/>
<dbReference type="PDBsum" id="8VR8"/>
<dbReference type="PDBsum" id="8VRL"/>
<dbReference type="PDBsum" id="8WHX"/>
<dbReference type="PDBsum" id="8WHY"/>
<dbReference type="PDBsum" id="8WI7"/>
<dbReference type="PDBsum" id="8WI8"/>
<dbReference type="PDBsum" id="8WIB"/>
<dbReference type="PDBsum" id="8WIC"/>
<dbReference type="PDBsum" id="8XZ3"/>
<dbReference type="EMDB" id="EMD-29397"/>
<dbReference type="EMDB" id="EMD-33096"/>
<dbReference type="EMDB" id="EMD-33599"/>
<dbReference type="EMDB" id="EMD-37007"/>
<dbReference type="EMDB" id="EMD-3750"/>
<dbReference type="EMDB" id="EMD-3751"/>
<dbReference type="EMDB" id="EMD-37551"/>
<dbReference type="EMDB" id="EMD-37552"/>
<dbReference type="EMDB" id="EMD-37559"/>
<dbReference type="EMDB" id="EMD-37560"/>
<dbReference type="EMDB" id="EMD-37562"/>
<dbReference type="EMDB" id="EMD-37563"/>
<dbReference type="EMDB" id="EMD-38788"/>
<dbReference type="EMDB" id="EMD-43074"/>
<dbReference type="EMDB" id="EMD-43075"/>
<dbReference type="EMDB" id="EMD-43076"/>
<dbReference type="EMDB" id="EMD-43267"/>
<dbReference type="EMDB" id="EMD-43294"/>
<dbReference type="EMDB" id="EMD-43305"/>
<dbReference type="EMDB" id="EMD-43317"/>
<dbReference type="EMDB" id="EMD-43333"/>
<dbReference type="EMDB" id="EMD-43476"/>
<dbReference type="EMDB" id="EMD-43477"/>
<dbReference type="EMDB" id="EMD-43484"/>
<dbReference type="EMDB" id="EMD-6789"/>
<dbReference type="EMDB" id="EMD-6920"/>
<dbReference type="EMDB" id="EMD-6921"/>
<dbReference type="EMDB" id="EMD-6922"/>
<dbReference type="EMDB" id="EMD-8932"/>
<dbReference type="EMDB" id="EMD-8937"/>
<dbReference type="SMR" id="A0R3I9"/>
<dbReference type="IntAct" id="A0R3I9">
    <property type="interactions" value="2"/>
</dbReference>
<dbReference type="STRING" id="246196.MSMEG_5489"/>
<dbReference type="PaxDb" id="246196-MSMEI_5337"/>
<dbReference type="GeneID" id="93460138"/>
<dbReference type="KEGG" id="msb:LJ00_27130"/>
<dbReference type="KEGG" id="msg:MSMEI_5337"/>
<dbReference type="KEGG" id="msm:MSMEG_5489"/>
<dbReference type="PATRIC" id="fig|246196.19.peg.5349"/>
<dbReference type="eggNOG" id="ENOG5033AVR">
    <property type="taxonomic scope" value="Bacteria"/>
</dbReference>
<dbReference type="OrthoDB" id="9807363at2"/>
<dbReference type="Proteomes" id="UP000000757">
    <property type="component" value="Chromosome"/>
</dbReference>
<dbReference type="Proteomes" id="UP000006158">
    <property type="component" value="Chromosome"/>
</dbReference>
<dbReference type="GO" id="GO:0015934">
    <property type="term" value="C:large ribosomal subunit"/>
    <property type="evidence" value="ECO:0007669"/>
    <property type="project" value="InterPro"/>
</dbReference>
<dbReference type="GO" id="GO:0003735">
    <property type="term" value="F:structural constituent of ribosome"/>
    <property type="evidence" value="ECO:0007669"/>
    <property type="project" value="InterPro"/>
</dbReference>
<dbReference type="GO" id="GO:0006412">
    <property type="term" value="P:translation"/>
    <property type="evidence" value="ECO:0007669"/>
    <property type="project" value="UniProtKB-UniRule"/>
</dbReference>
<dbReference type="HAMAP" id="MF_00340">
    <property type="entry name" value="Ribosomal_bL32"/>
    <property type="match status" value="1"/>
</dbReference>
<dbReference type="InterPro" id="IPR002677">
    <property type="entry name" value="Ribosomal_bL32"/>
</dbReference>
<dbReference type="InterPro" id="IPR011332">
    <property type="entry name" value="Ribosomal_zn-bd"/>
</dbReference>
<dbReference type="NCBIfam" id="TIGR01031">
    <property type="entry name" value="rpmF_bact"/>
    <property type="match status" value="1"/>
</dbReference>
<dbReference type="Pfam" id="PF01783">
    <property type="entry name" value="Ribosomal_L32p"/>
    <property type="match status" value="1"/>
</dbReference>
<dbReference type="SUPFAM" id="SSF57829">
    <property type="entry name" value="Zn-binding ribosomal proteins"/>
    <property type="match status" value="1"/>
</dbReference>
<name>RL32_MYCS2</name>
<evidence type="ECO:0000255" key="1">
    <source>
        <dbReference type="HAMAP-Rule" id="MF_00340"/>
    </source>
</evidence>
<evidence type="ECO:0000256" key="2">
    <source>
        <dbReference type="SAM" id="MobiDB-lite"/>
    </source>
</evidence>
<evidence type="ECO:0000305" key="3"/>
<evidence type="ECO:0007829" key="4">
    <source>
        <dbReference type="PDB" id="5O60"/>
    </source>
</evidence>
<evidence type="ECO:0007829" key="5">
    <source>
        <dbReference type="PDB" id="5XYM"/>
    </source>
</evidence>
<keyword id="KW-0002">3D-structure</keyword>
<keyword id="KW-1185">Reference proteome</keyword>
<keyword id="KW-0687">Ribonucleoprotein</keyword>
<keyword id="KW-0689">Ribosomal protein</keyword>
<protein>
    <recommendedName>
        <fullName evidence="1">Large ribosomal subunit protein bL32</fullName>
    </recommendedName>
    <alternativeName>
        <fullName evidence="3">50S ribosomal protein L32</fullName>
    </alternativeName>
</protein>
<proteinExistence type="evidence at protein level"/>
<sequence length="57" mass="6452">MAVPKRRMSRANTRSRRAQWKAEAPGLVTVSVAGQQRKVPRRLLKAARLGLVDLDKR</sequence>
<reference key="1">
    <citation type="submission" date="2006-10" db="EMBL/GenBank/DDBJ databases">
        <authorList>
            <person name="Fleischmann R.D."/>
            <person name="Dodson R.J."/>
            <person name="Haft D.H."/>
            <person name="Merkel J.S."/>
            <person name="Nelson W.C."/>
            <person name="Fraser C.M."/>
        </authorList>
    </citation>
    <scope>NUCLEOTIDE SEQUENCE [LARGE SCALE GENOMIC DNA]</scope>
    <source>
        <strain>ATCC 700084 / mc(2)155</strain>
    </source>
</reference>
<reference key="2">
    <citation type="journal article" date="2007" name="Genome Biol.">
        <title>Interrupted coding sequences in Mycobacterium smegmatis: authentic mutations or sequencing errors?</title>
        <authorList>
            <person name="Deshayes C."/>
            <person name="Perrodou E."/>
            <person name="Gallien S."/>
            <person name="Euphrasie D."/>
            <person name="Schaeffer C."/>
            <person name="Van-Dorsselaer A."/>
            <person name="Poch O."/>
            <person name="Lecompte O."/>
            <person name="Reyrat J.-M."/>
        </authorList>
    </citation>
    <scope>NUCLEOTIDE SEQUENCE [LARGE SCALE GENOMIC DNA]</scope>
    <source>
        <strain>ATCC 700084 / mc(2)155</strain>
    </source>
</reference>
<reference key="3">
    <citation type="journal article" date="2009" name="Genome Res.">
        <title>Ortho-proteogenomics: multiple proteomes investigation through orthology and a new MS-based protocol.</title>
        <authorList>
            <person name="Gallien S."/>
            <person name="Perrodou E."/>
            <person name="Carapito C."/>
            <person name="Deshayes C."/>
            <person name="Reyrat J.-M."/>
            <person name="Van Dorsselaer A."/>
            <person name="Poch O."/>
            <person name="Schaeffer C."/>
            <person name="Lecompte O."/>
        </authorList>
    </citation>
    <scope>NUCLEOTIDE SEQUENCE [LARGE SCALE GENOMIC DNA]</scope>
    <source>
        <strain>ATCC 700084 / mc(2)155</strain>
    </source>
</reference>
<feature type="chain" id="PRO_0000296505" description="Large ribosomal subunit protein bL32">
    <location>
        <begin position="1"/>
        <end position="57"/>
    </location>
</feature>
<feature type="region of interest" description="Disordered" evidence="2">
    <location>
        <begin position="1"/>
        <end position="20"/>
    </location>
</feature>
<feature type="compositionally biased region" description="Basic residues" evidence="2">
    <location>
        <begin position="1"/>
        <end position="19"/>
    </location>
</feature>
<feature type="helix" evidence="5">
    <location>
        <begin position="10"/>
        <end position="17"/>
    </location>
</feature>
<feature type="strand" evidence="4">
    <location>
        <begin position="27"/>
        <end position="32"/>
    </location>
</feature>
<feature type="strand" evidence="4">
    <location>
        <begin position="35"/>
        <end position="40"/>
    </location>
</feature>
<feature type="helix" evidence="5">
    <location>
        <begin position="41"/>
        <end position="43"/>
    </location>
</feature>
<feature type="helix" evidence="5">
    <location>
        <begin position="44"/>
        <end position="49"/>
    </location>
</feature>